<evidence type="ECO:0000250" key="1"/>
<evidence type="ECO:0000250" key="2">
    <source>
        <dbReference type="UniProtKB" id="P00157"/>
    </source>
</evidence>
<evidence type="ECO:0000255" key="3">
    <source>
        <dbReference type="PROSITE-ProRule" id="PRU00967"/>
    </source>
</evidence>
<evidence type="ECO:0000255" key="4">
    <source>
        <dbReference type="PROSITE-ProRule" id="PRU00968"/>
    </source>
</evidence>
<name>CYB_BALOM</name>
<feature type="chain" id="PRO_0000254662" description="Cytochrome b">
    <location>
        <begin position="1"/>
        <end position="379"/>
    </location>
</feature>
<feature type="transmembrane region" description="Helical" evidence="2">
    <location>
        <begin position="33"/>
        <end position="53"/>
    </location>
</feature>
<feature type="transmembrane region" description="Helical" evidence="2">
    <location>
        <begin position="77"/>
        <end position="98"/>
    </location>
</feature>
<feature type="transmembrane region" description="Helical" evidence="2">
    <location>
        <begin position="113"/>
        <end position="133"/>
    </location>
</feature>
<feature type="transmembrane region" description="Helical" evidence="2">
    <location>
        <begin position="178"/>
        <end position="198"/>
    </location>
</feature>
<feature type="transmembrane region" description="Helical" evidence="2">
    <location>
        <begin position="226"/>
        <end position="246"/>
    </location>
</feature>
<feature type="transmembrane region" description="Helical" evidence="2">
    <location>
        <begin position="288"/>
        <end position="308"/>
    </location>
</feature>
<feature type="transmembrane region" description="Helical" evidence="2">
    <location>
        <begin position="320"/>
        <end position="340"/>
    </location>
</feature>
<feature type="transmembrane region" description="Helical" evidence="2">
    <location>
        <begin position="347"/>
        <end position="367"/>
    </location>
</feature>
<feature type="binding site" description="axial binding residue" evidence="2">
    <location>
        <position position="83"/>
    </location>
    <ligand>
        <name>heme b</name>
        <dbReference type="ChEBI" id="CHEBI:60344"/>
        <label>b562</label>
    </ligand>
    <ligandPart>
        <name>Fe</name>
        <dbReference type="ChEBI" id="CHEBI:18248"/>
    </ligandPart>
</feature>
<feature type="binding site" description="axial binding residue" evidence="2">
    <location>
        <position position="97"/>
    </location>
    <ligand>
        <name>heme b</name>
        <dbReference type="ChEBI" id="CHEBI:60344"/>
        <label>b566</label>
    </ligand>
    <ligandPart>
        <name>Fe</name>
        <dbReference type="ChEBI" id="CHEBI:18248"/>
    </ligandPart>
</feature>
<feature type="binding site" description="axial binding residue" evidence="2">
    <location>
        <position position="182"/>
    </location>
    <ligand>
        <name>heme b</name>
        <dbReference type="ChEBI" id="CHEBI:60344"/>
        <label>b562</label>
    </ligand>
    <ligandPart>
        <name>Fe</name>
        <dbReference type="ChEBI" id="CHEBI:18248"/>
    </ligandPart>
</feature>
<feature type="binding site" description="axial binding residue" evidence="2">
    <location>
        <position position="196"/>
    </location>
    <ligand>
        <name>heme b</name>
        <dbReference type="ChEBI" id="CHEBI:60344"/>
        <label>b566</label>
    </ligand>
    <ligandPart>
        <name>Fe</name>
        <dbReference type="ChEBI" id="CHEBI:18248"/>
    </ligandPart>
</feature>
<feature type="binding site" evidence="2">
    <location>
        <position position="201"/>
    </location>
    <ligand>
        <name>a ubiquinone</name>
        <dbReference type="ChEBI" id="CHEBI:16389"/>
    </ligand>
</feature>
<feature type="sequence variant" description="In strain: Isolate NSMT-32992.">
    <original>V</original>
    <variation>I</variation>
    <location>
        <position position="13"/>
    </location>
</feature>
<geneLocation type="mitochondrion"/>
<reference key="1">
    <citation type="journal article" date="2006" name="Mol. Phylogenet. Evol.">
        <title>Balaenoptera omurai is a newly discovered baleen whale that represents an ancient evolutionary lineage.</title>
        <authorList>
            <person name="Sasaki T."/>
            <person name="Nikaido M."/>
            <person name="Wada S."/>
            <person name="Yamada T.K."/>
            <person name="Cao Y."/>
            <person name="Hasegawa M."/>
            <person name="Okada N."/>
        </authorList>
    </citation>
    <scope>NUCLEOTIDE SEQUENCE [GENOMIC DNA]</scope>
    <source>
        <strain>Isolate NSMT-32505</strain>
        <strain>Isolate NSMT-32992</strain>
        <tissue>Muscle</tissue>
    </source>
</reference>
<dbReference type="EMBL" id="AB201256">
    <property type="protein sequence ID" value="BAE91839.1"/>
    <property type="molecule type" value="Genomic_DNA"/>
</dbReference>
<dbReference type="EMBL" id="AB201257">
    <property type="protein sequence ID" value="BAE91852.1"/>
    <property type="molecule type" value="Genomic_DNA"/>
</dbReference>
<dbReference type="RefSeq" id="YP_537144.1">
    <property type="nucleotide sequence ID" value="NC_007937.1"/>
</dbReference>
<dbReference type="SMR" id="Q25CF7"/>
<dbReference type="GeneID" id="3979268"/>
<dbReference type="CTD" id="4519"/>
<dbReference type="GO" id="GO:0005743">
    <property type="term" value="C:mitochondrial inner membrane"/>
    <property type="evidence" value="ECO:0007669"/>
    <property type="project" value="UniProtKB-SubCell"/>
</dbReference>
<dbReference type="GO" id="GO:0045275">
    <property type="term" value="C:respiratory chain complex III"/>
    <property type="evidence" value="ECO:0007669"/>
    <property type="project" value="InterPro"/>
</dbReference>
<dbReference type="GO" id="GO:0046872">
    <property type="term" value="F:metal ion binding"/>
    <property type="evidence" value="ECO:0007669"/>
    <property type="project" value="UniProtKB-KW"/>
</dbReference>
<dbReference type="GO" id="GO:0008121">
    <property type="term" value="F:ubiquinol-cytochrome-c reductase activity"/>
    <property type="evidence" value="ECO:0007669"/>
    <property type="project" value="InterPro"/>
</dbReference>
<dbReference type="GO" id="GO:0006122">
    <property type="term" value="P:mitochondrial electron transport, ubiquinol to cytochrome c"/>
    <property type="evidence" value="ECO:0007669"/>
    <property type="project" value="TreeGrafter"/>
</dbReference>
<dbReference type="CDD" id="cd00290">
    <property type="entry name" value="cytochrome_b_C"/>
    <property type="match status" value="1"/>
</dbReference>
<dbReference type="CDD" id="cd00284">
    <property type="entry name" value="Cytochrome_b_N"/>
    <property type="match status" value="1"/>
</dbReference>
<dbReference type="FunFam" id="1.20.810.10:FF:000002">
    <property type="entry name" value="Cytochrome b"/>
    <property type="match status" value="1"/>
</dbReference>
<dbReference type="Gene3D" id="1.20.810.10">
    <property type="entry name" value="Cytochrome Bc1 Complex, Chain C"/>
    <property type="match status" value="1"/>
</dbReference>
<dbReference type="InterPro" id="IPR005798">
    <property type="entry name" value="Cyt_b/b6_C"/>
</dbReference>
<dbReference type="InterPro" id="IPR036150">
    <property type="entry name" value="Cyt_b/b6_C_sf"/>
</dbReference>
<dbReference type="InterPro" id="IPR005797">
    <property type="entry name" value="Cyt_b/b6_N"/>
</dbReference>
<dbReference type="InterPro" id="IPR027387">
    <property type="entry name" value="Cytb/b6-like_sf"/>
</dbReference>
<dbReference type="InterPro" id="IPR030689">
    <property type="entry name" value="Cytochrome_b"/>
</dbReference>
<dbReference type="InterPro" id="IPR048260">
    <property type="entry name" value="Cytochrome_b_C_euk/bac"/>
</dbReference>
<dbReference type="InterPro" id="IPR048259">
    <property type="entry name" value="Cytochrome_b_N_euk/bac"/>
</dbReference>
<dbReference type="InterPro" id="IPR016174">
    <property type="entry name" value="Di-haem_cyt_TM"/>
</dbReference>
<dbReference type="PANTHER" id="PTHR19271">
    <property type="entry name" value="CYTOCHROME B"/>
    <property type="match status" value="1"/>
</dbReference>
<dbReference type="PANTHER" id="PTHR19271:SF16">
    <property type="entry name" value="CYTOCHROME B"/>
    <property type="match status" value="1"/>
</dbReference>
<dbReference type="Pfam" id="PF00032">
    <property type="entry name" value="Cytochrom_B_C"/>
    <property type="match status" value="1"/>
</dbReference>
<dbReference type="Pfam" id="PF00033">
    <property type="entry name" value="Cytochrome_B"/>
    <property type="match status" value="1"/>
</dbReference>
<dbReference type="PIRSF" id="PIRSF038885">
    <property type="entry name" value="COB"/>
    <property type="match status" value="1"/>
</dbReference>
<dbReference type="SUPFAM" id="SSF81648">
    <property type="entry name" value="a domain/subunit of cytochrome bc1 complex (Ubiquinol-cytochrome c reductase)"/>
    <property type="match status" value="1"/>
</dbReference>
<dbReference type="SUPFAM" id="SSF81342">
    <property type="entry name" value="Transmembrane di-heme cytochromes"/>
    <property type="match status" value="1"/>
</dbReference>
<dbReference type="PROSITE" id="PS51003">
    <property type="entry name" value="CYTB_CTER"/>
    <property type="match status" value="1"/>
</dbReference>
<dbReference type="PROSITE" id="PS51002">
    <property type="entry name" value="CYTB_NTER"/>
    <property type="match status" value="1"/>
</dbReference>
<sequence>MTNIRKTHPLMKVVNNAFVDLPTPSNISSWWNFGSLLGLCLITQILTGLFLAMHYTPDTTTAFSSVTHICRDVNYGWIIRYLHANGASMFFICLYAHMGRGLYYGSHVFRETWNIGIILLFTVMATAFVGYVLPWGQMSFWGATVITNLLSAIPYIGTTLVEWIWGGFSVDKATLTRFFAFHFILPFIILALTMVHLIFLHETGSNNPTGILSDMDKIPFHPYYTIKDILGALLLILALLTLTLFAPDLLGDPDNYTPANPLSTPAHIKPEWYFLFAYAILRSIPNKLGGVLALLLSILILALVPMLHTSKQRSMMFRPFSQFLFWVLVADLLTLTWIGGQPVEHPYVIVGQLASILYFLLILVLMPLASLIENKLTKW</sequence>
<accession>Q25CF7</accession>
<accession>Q25CE4</accession>
<proteinExistence type="inferred from homology"/>
<organism>
    <name type="scientific">Balaenoptera omurai</name>
    <name type="common">Omura's baleen whale</name>
    <dbReference type="NCBI Taxonomy" id="255217"/>
    <lineage>
        <taxon>Eukaryota</taxon>
        <taxon>Metazoa</taxon>
        <taxon>Chordata</taxon>
        <taxon>Craniata</taxon>
        <taxon>Vertebrata</taxon>
        <taxon>Euteleostomi</taxon>
        <taxon>Mammalia</taxon>
        <taxon>Eutheria</taxon>
        <taxon>Laurasiatheria</taxon>
        <taxon>Artiodactyla</taxon>
        <taxon>Whippomorpha</taxon>
        <taxon>Cetacea</taxon>
        <taxon>Mysticeti</taxon>
        <taxon>Balaenopteridae</taxon>
        <taxon>Balaenoptera</taxon>
    </lineage>
</organism>
<keyword id="KW-0249">Electron transport</keyword>
<keyword id="KW-0349">Heme</keyword>
<keyword id="KW-0408">Iron</keyword>
<keyword id="KW-0472">Membrane</keyword>
<keyword id="KW-0479">Metal-binding</keyword>
<keyword id="KW-0496">Mitochondrion</keyword>
<keyword id="KW-0999">Mitochondrion inner membrane</keyword>
<keyword id="KW-0679">Respiratory chain</keyword>
<keyword id="KW-0812">Transmembrane</keyword>
<keyword id="KW-1133">Transmembrane helix</keyword>
<keyword id="KW-0813">Transport</keyword>
<keyword id="KW-0830">Ubiquinone</keyword>
<gene>
    <name type="primary">MT-CYB</name>
    <name type="synonym">COB</name>
    <name type="synonym">CYTB</name>
    <name type="synonym">MTCYB</name>
</gene>
<protein>
    <recommendedName>
        <fullName>Cytochrome b</fullName>
    </recommendedName>
    <alternativeName>
        <fullName>Complex III subunit 3</fullName>
    </alternativeName>
    <alternativeName>
        <fullName>Complex III subunit III</fullName>
    </alternativeName>
    <alternativeName>
        <fullName>Cytochrome b-c1 complex subunit 3</fullName>
    </alternativeName>
    <alternativeName>
        <fullName>Ubiquinol-cytochrome-c reductase complex cytochrome b subunit</fullName>
    </alternativeName>
</protein>
<comment type="function">
    <text evidence="2">Component of the ubiquinol-cytochrome c reductase complex (complex III or cytochrome b-c1 complex) that is part of the mitochondrial respiratory chain. The b-c1 complex mediates electron transfer from ubiquinol to cytochrome c. Contributes to the generation of a proton gradient across the mitochondrial membrane that is then used for ATP synthesis.</text>
</comment>
<comment type="cofactor">
    <cofactor evidence="2">
        <name>heme b</name>
        <dbReference type="ChEBI" id="CHEBI:60344"/>
    </cofactor>
    <text evidence="2">Binds 2 heme b groups non-covalently.</text>
</comment>
<comment type="subunit">
    <text evidence="2">The cytochrome bc1 complex contains 11 subunits: 3 respiratory subunits (MT-CYB, CYC1 and UQCRFS1), 2 core proteins (UQCRC1 and UQCRC2) and 6 low-molecular weight proteins (UQCRH/QCR6, UQCRB/QCR7, UQCRQ/QCR8, UQCR10/QCR9, UQCR11/QCR10 and a cleavage product of UQCRFS1). This cytochrome bc1 complex then forms a dimer.</text>
</comment>
<comment type="subcellular location">
    <subcellularLocation>
        <location evidence="2">Mitochondrion inner membrane</location>
        <topology evidence="2">Multi-pass membrane protein</topology>
    </subcellularLocation>
</comment>
<comment type="miscellaneous">
    <text evidence="1">Heme 1 (or BL or b562) is low-potential and absorbs at about 562 nm, and heme 2 (or BH or b566) is high-potential and absorbs at about 566 nm.</text>
</comment>
<comment type="similarity">
    <text evidence="3 4">Belongs to the cytochrome b family.</text>
</comment>
<comment type="caution">
    <text evidence="2">The full-length protein contains only eight transmembrane helices, not nine as predicted by bioinformatics tools.</text>
</comment>